<feature type="chain" id="PRO_0000195867" description="Aspartate--ammonia ligase">
    <location>
        <begin position="1"/>
        <end position="327"/>
    </location>
</feature>
<comment type="catalytic activity">
    <reaction evidence="1">
        <text>L-aspartate + NH4(+) + ATP = L-asparagine + AMP + diphosphate + H(+)</text>
        <dbReference type="Rhea" id="RHEA:11372"/>
        <dbReference type="ChEBI" id="CHEBI:15378"/>
        <dbReference type="ChEBI" id="CHEBI:28938"/>
        <dbReference type="ChEBI" id="CHEBI:29991"/>
        <dbReference type="ChEBI" id="CHEBI:30616"/>
        <dbReference type="ChEBI" id="CHEBI:33019"/>
        <dbReference type="ChEBI" id="CHEBI:58048"/>
        <dbReference type="ChEBI" id="CHEBI:456215"/>
        <dbReference type="EC" id="6.3.1.1"/>
    </reaction>
</comment>
<comment type="pathway">
    <text evidence="1">Amino-acid biosynthesis; L-asparagine biosynthesis; L-asparagine from L-aspartate (ammonia route): step 1/1.</text>
</comment>
<comment type="subcellular location">
    <subcellularLocation>
        <location evidence="1">Cytoplasm</location>
    </subcellularLocation>
</comment>
<comment type="similarity">
    <text evidence="1">Belongs to the class-II aminoacyl-tRNA synthetase family. AsnA subfamily.</text>
</comment>
<keyword id="KW-0028">Amino-acid biosynthesis</keyword>
<keyword id="KW-0061">Asparagine biosynthesis</keyword>
<keyword id="KW-0067">ATP-binding</keyword>
<keyword id="KW-0963">Cytoplasm</keyword>
<keyword id="KW-0436">Ligase</keyword>
<keyword id="KW-0547">Nucleotide-binding</keyword>
<keyword id="KW-1185">Reference proteome</keyword>
<dbReference type="EC" id="6.3.1.1" evidence="1"/>
<dbReference type="EMBL" id="AE016879">
    <property type="protein sequence ID" value="AAP25717.1"/>
    <property type="molecule type" value="Genomic_DNA"/>
</dbReference>
<dbReference type="EMBL" id="AE017334">
    <property type="protein sequence ID" value="AAT30918.1"/>
    <property type="molecule type" value="Genomic_DNA"/>
</dbReference>
<dbReference type="EMBL" id="AE017225">
    <property type="protein sequence ID" value="AAT53990.1"/>
    <property type="molecule type" value="Genomic_DNA"/>
</dbReference>
<dbReference type="RefSeq" id="NP_844231.1">
    <property type="nucleotide sequence ID" value="NC_003997.3"/>
</dbReference>
<dbReference type="RefSeq" id="WP_000284908.1">
    <property type="nucleotide sequence ID" value="NZ_WXXJ01000017.1"/>
</dbReference>
<dbReference type="RefSeq" id="YP_027939.1">
    <property type="nucleotide sequence ID" value="NC_005945.1"/>
</dbReference>
<dbReference type="SMR" id="Q81S64"/>
<dbReference type="IntAct" id="Q81S64">
    <property type="interactions" value="1"/>
</dbReference>
<dbReference type="STRING" id="261594.GBAA_1808"/>
<dbReference type="DNASU" id="1086656"/>
<dbReference type="GeneID" id="69532735"/>
<dbReference type="KEGG" id="ban:BA_1808"/>
<dbReference type="KEGG" id="banh:HYU01_09075"/>
<dbReference type="KEGG" id="bar:GBAA_1808"/>
<dbReference type="KEGG" id="bat:BAS1673"/>
<dbReference type="PATRIC" id="fig|198094.11.peg.1777"/>
<dbReference type="eggNOG" id="COG2502">
    <property type="taxonomic scope" value="Bacteria"/>
</dbReference>
<dbReference type="HOGENOM" id="CLU_071543_0_0_9"/>
<dbReference type="OMA" id="QSRICMF"/>
<dbReference type="OrthoDB" id="9766088at2"/>
<dbReference type="UniPathway" id="UPA00134">
    <property type="reaction ID" value="UER00194"/>
</dbReference>
<dbReference type="Proteomes" id="UP000000427">
    <property type="component" value="Chromosome"/>
</dbReference>
<dbReference type="Proteomes" id="UP000000594">
    <property type="component" value="Chromosome"/>
</dbReference>
<dbReference type="GO" id="GO:0005829">
    <property type="term" value="C:cytosol"/>
    <property type="evidence" value="ECO:0007669"/>
    <property type="project" value="TreeGrafter"/>
</dbReference>
<dbReference type="GO" id="GO:0004071">
    <property type="term" value="F:aspartate-ammonia ligase activity"/>
    <property type="evidence" value="ECO:0007669"/>
    <property type="project" value="UniProtKB-UniRule"/>
</dbReference>
<dbReference type="GO" id="GO:0005524">
    <property type="term" value="F:ATP binding"/>
    <property type="evidence" value="ECO:0007669"/>
    <property type="project" value="UniProtKB-UniRule"/>
</dbReference>
<dbReference type="GO" id="GO:0140096">
    <property type="term" value="F:catalytic activity, acting on a protein"/>
    <property type="evidence" value="ECO:0007669"/>
    <property type="project" value="UniProtKB-ARBA"/>
</dbReference>
<dbReference type="GO" id="GO:0016740">
    <property type="term" value="F:transferase activity"/>
    <property type="evidence" value="ECO:0007669"/>
    <property type="project" value="UniProtKB-ARBA"/>
</dbReference>
<dbReference type="GO" id="GO:0070981">
    <property type="term" value="P:L-asparagine biosynthetic process"/>
    <property type="evidence" value="ECO:0007669"/>
    <property type="project" value="UniProtKB-UniRule"/>
</dbReference>
<dbReference type="CDD" id="cd00645">
    <property type="entry name" value="AsnA"/>
    <property type="match status" value="1"/>
</dbReference>
<dbReference type="Gene3D" id="3.30.930.10">
    <property type="entry name" value="Bira Bifunctional Protein, Domain 2"/>
    <property type="match status" value="1"/>
</dbReference>
<dbReference type="HAMAP" id="MF_00555">
    <property type="entry name" value="AsnA"/>
    <property type="match status" value="1"/>
</dbReference>
<dbReference type="InterPro" id="IPR006195">
    <property type="entry name" value="aa-tRNA-synth_II"/>
</dbReference>
<dbReference type="InterPro" id="IPR045864">
    <property type="entry name" value="aa-tRNA-synth_II/BPL/LPL"/>
</dbReference>
<dbReference type="InterPro" id="IPR004618">
    <property type="entry name" value="AsnA"/>
</dbReference>
<dbReference type="NCBIfam" id="TIGR00669">
    <property type="entry name" value="asnA"/>
    <property type="match status" value="1"/>
</dbReference>
<dbReference type="PANTHER" id="PTHR30073">
    <property type="entry name" value="ASPARTATE--AMMONIA LIGASE"/>
    <property type="match status" value="1"/>
</dbReference>
<dbReference type="PANTHER" id="PTHR30073:SF5">
    <property type="entry name" value="ASPARTATE--AMMONIA LIGASE"/>
    <property type="match status" value="1"/>
</dbReference>
<dbReference type="Pfam" id="PF03590">
    <property type="entry name" value="AsnA"/>
    <property type="match status" value="1"/>
</dbReference>
<dbReference type="PIRSF" id="PIRSF001555">
    <property type="entry name" value="Asp_ammon_ligase"/>
    <property type="match status" value="1"/>
</dbReference>
<dbReference type="SUPFAM" id="SSF55681">
    <property type="entry name" value="Class II aaRS and biotin synthetases"/>
    <property type="match status" value="1"/>
</dbReference>
<dbReference type="PROSITE" id="PS50862">
    <property type="entry name" value="AA_TRNA_LIGASE_II"/>
    <property type="match status" value="1"/>
</dbReference>
<accession>Q81S64</accession>
<accession>Q6I0E7</accession>
<accession>Q6KUB4</accession>
<organism>
    <name type="scientific">Bacillus anthracis</name>
    <dbReference type="NCBI Taxonomy" id="1392"/>
    <lineage>
        <taxon>Bacteria</taxon>
        <taxon>Bacillati</taxon>
        <taxon>Bacillota</taxon>
        <taxon>Bacilli</taxon>
        <taxon>Bacillales</taxon>
        <taxon>Bacillaceae</taxon>
        <taxon>Bacillus</taxon>
        <taxon>Bacillus cereus group</taxon>
    </lineage>
</organism>
<reference key="1">
    <citation type="journal article" date="2003" name="Nature">
        <title>The genome sequence of Bacillus anthracis Ames and comparison to closely related bacteria.</title>
        <authorList>
            <person name="Read T.D."/>
            <person name="Peterson S.N."/>
            <person name="Tourasse N.J."/>
            <person name="Baillie L.W."/>
            <person name="Paulsen I.T."/>
            <person name="Nelson K.E."/>
            <person name="Tettelin H."/>
            <person name="Fouts D.E."/>
            <person name="Eisen J.A."/>
            <person name="Gill S.R."/>
            <person name="Holtzapple E.K."/>
            <person name="Okstad O.A."/>
            <person name="Helgason E."/>
            <person name="Rilstone J."/>
            <person name="Wu M."/>
            <person name="Kolonay J.F."/>
            <person name="Beanan M.J."/>
            <person name="Dodson R.J."/>
            <person name="Brinkac L.M."/>
            <person name="Gwinn M.L."/>
            <person name="DeBoy R.T."/>
            <person name="Madpu R."/>
            <person name="Daugherty S.C."/>
            <person name="Durkin A.S."/>
            <person name="Haft D.H."/>
            <person name="Nelson W.C."/>
            <person name="Peterson J.D."/>
            <person name="Pop M."/>
            <person name="Khouri H.M."/>
            <person name="Radune D."/>
            <person name="Benton J.L."/>
            <person name="Mahamoud Y."/>
            <person name="Jiang L."/>
            <person name="Hance I.R."/>
            <person name="Weidman J.F."/>
            <person name="Berry K.J."/>
            <person name="Plaut R.D."/>
            <person name="Wolf A.M."/>
            <person name="Watkins K.L."/>
            <person name="Nierman W.C."/>
            <person name="Hazen A."/>
            <person name="Cline R.T."/>
            <person name="Redmond C."/>
            <person name="Thwaite J.E."/>
            <person name="White O."/>
            <person name="Salzberg S.L."/>
            <person name="Thomason B."/>
            <person name="Friedlander A.M."/>
            <person name="Koehler T.M."/>
            <person name="Hanna P.C."/>
            <person name="Kolstoe A.-B."/>
            <person name="Fraser C.M."/>
        </authorList>
    </citation>
    <scope>NUCLEOTIDE SEQUENCE [LARGE SCALE GENOMIC DNA]</scope>
    <source>
        <strain>Ames / isolate Porton</strain>
    </source>
</reference>
<reference key="2">
    <citation type="journal article" date="2009" name="J. Bacteriol.">
        <title>The complete genome sequence of Bacillus anthracis Ames 'Ancestor'.</title>
        <authorList>
            <person name="Ravel J."/>
            <person name="Jiang L."/>
            <person name="Stanley S.T."/>
            <person name="Wilson M.R."/>
            <person name="Decker R.S."/>
            <person name="Read T.D."/>
            <person name="Worsham P."/>
            <person name="Keim P.S."/>
            <person name="Salzberg S.L."/>
            <person name="Fraser-Liggett C.M."/>
            <person name="Rasko D.A."/>
        </authorList>
    </citation>
    <scope>NUCLEOTIDE SEQUENCE [LARGE SCALE GENOMIC DNA]</scope>
    <source>
        <strain>Ames ancestor</strain>
    </source>
</reference>
<reference key="3">
    <citation type="submission" date="2004-01" db="EMBL/GenBank/DDBJ databases">
        <title>Complete genome sequence of Bacillus anthracis Sterne.</title>
        <authorList>
            <person name="Brettin T.S."/>
            <person name="Bruce D."/>
            <person name="Challacombe J.F."/>
            <person name="Gilna P."/>
            <person name="Han C."/>
            <person name="Hill K."/>
            <person name="Hitchcock P."/>
            <person name="Jackson P."/>
            <person name="Keim P."/>
            <person name="Longmire J."/>
            <person name="Lucas S."/>
            <person name="Okinaka R."/>
            <person name="Richardson P."/>
            <person name="Rubin E."/>
            <person name="Tice H."/>
        </authorList>
    </citation>
    <scope>NUCLEOTIDE SEQUENCE [LARGE SCALE GENOMIC DNA]</scope>
    <source>
        <strain>Sterne</strain>
    </source>
</reference>
<proteinExistence type="inferred from homology"/>
<gene>
    <name evidence="1" type="primary">asnA</name>
    <name type="ordered locus">BA_1808</name>
    <name type="ordered locus">GBAA_1808</name>
    <name type="ordered locus">BAS1673</name>
</gene>
<sequence>MYQSLMTVRETQIAIKEVKTFFEDQLAKRLELFRVSAPLFVTKKSGLNDHLNGVERPIEFDMLHSGEELEIVHSLAKWKRFALHEYGYEAGEGLYTNMNAIRRDEELDATHSIYVDQWDWEKIVQKEWRTVDYLQKTVLTIYGIFKDLEDHLFEKYPFLGKYLPEEIVFVTSQELEDKYPELTPKDREHAIAKEHGAVFIIGIGDALRSGEKHDGRAADYDDWKLNGDILFWHPVLQSSFELSSMGIRVDSKSLDEQLTKTGEDFKREYDFHKGILEDVLPLTIGGGIGQSRMCMYFLRKAHIGEVQSSVWPDDLREACKKENIHLF</sequence>
<name>ASNA_BACAN</name>
<evidence type="ECO:0000255" key="1">
    <source>
        <dbReference type="HAMAP-Rule" id="MF_00555"/>
    </source>
</evidence>
<protein>
    <recommendedName>
        <fullName evidence="1">Aspartate--ammonia ligase</fullName>
        <ecNumber evidence="1">6.3.1.1</ecNumber>
    </recommendedName>
    <alternativeName>
        <fullName evidence="1">Asparagine synthetase A</fullName>
    </alternativeName>
</protein>